<feature type="signal peptide" evidence="1">
    <location>
        <begin position="1"/>
        <end position="19"/>
    </location>
</feature>
<feature type="chain" id="PRO_0000356347" description="Phospholipase A2 inhibitor clone 06/08">
    <location>
        <begin position="20"/>
        <end position="166"/>
    </location>
</feature>
<feature type="domain" description="C-type lectin" evidence="5">
    <location>
        <begin position="46"/>
        <end position="161"/>
    </location>
</feature>
<feature type="glycosylation site" description="N-linked (GlcNAc...) asparagine" evidence="4">
    <location>
        <position position="61"/>
    </location>
</feature>
<feature type="glycosylation site" description="N-linked (GlcNAc...) asparagine" evidence="4">
    <location>
        <position position="122"/>
    </location>
</feature>
<feature type="disulfide bond" evidence="3">
    <location>
        <begin position="83"/>
        <end position="160"/>
    </location>
</feature>
<feature type="disulfide bond" evidence="3">
    <location>
        <begin position="138"/>
        <end position="152"/>
    </location>
</feature>
<protein>
    <recommendedName>
        <fullName>Phospholipase A2 inhibitor clone 06/08</fullName>
        <shortName>alpha-PLI</shortName>
    </recommendedName>
</protein>
<reference key="1">
    <citation type="submission" date="2008-01" db="EMBL/GenBank/DDBJ databases">
        <title>A profile of the phospholipase A2 inhibitors of the alpha class prospected in Brazilian Crotalidae snakes: structural and phylogenetic analysis.</title>
        <authorList>
            <person name="Estevao-Costa M.I."/>
            <person name="Costa M.A.F."/>
            <person name="Mudado M.A."/>
            <person name="Franco G.R."/>
            <person name="Fortes-Dias C.L."/>
        </authorList>
    </citation>
    <scope>NUCLEOTIDE SEQUENCE [MRNA]</scope>
    <source>
        <tissue>Liver</tissue>
    </source>
</reference>
<keyword id="KW-0106">Calcium</keyword>
<keyword id="KW-1015">Disulfide bond</keyword>
<keyword id="KW-0325">Glycoprotein</keyword>
<keyword id="KW-0430">Lectin</keyword>
<keyword id="KW-0593">Phospholipase A2 inhibitor</keyword>
<keyword id="KW-0964">Secreted</keyword>
<keyword id="KW-0732">Signal</keyword>
<organism>
    <name type="scientific">Bothrops neuwiedi</name>
    <name type="common">Neuwied's lancehead</name>
    <dbReference type="NCBI Taxonomy" id="95648"/>
    <lineage>
        <taxon>Eukaryota</taxon>
        <taxon>Metazoa</taxon>
        <taxon>Chordata</taxon>
        <taxon>Craniata</taxon>
        <taxon>Vertebrata</taxon>
        <taxon>Euteleostomi</taxon>
        <taxon>Lepidosauria</taxon>
        <taxon>Squamata</taxon>
        <taxon>Bifurcata</taxon>
        <taxon>Unidentata</taxon>
        <taxon>Episquamata</taxon>
        <taxon>Toxicofera</taxon>
        <taxon>Serpentes</taxon>
        <taxon>Colubroidea</taxon>
        <taxon>Viperidae</taxon>
        <taxon>Crotalinae</taxon>
        <taxon>Bothrops</taxon>
    </lineage>
</organism>
<evidence type="ECO:0000250" key="1"/>
<evidence type="ECO:0000250" key="2">
    <source>
        <dbReference type="UniProtKB" id="A1XRN2"/>
    </source>
</evidence>
<evidence type="ECO:0000250" key="3">
    <source>
        <dbReference type="UniProtKB" id="P21755"/>
    </source>
</evidence>
<evidence type="ECO:0000255" key="4"/>
<evidence type="ECO:0000255" key="5">
    <source>
        <dbReference type="PROSITE-ProRule" id="PRU00040"/>
    </source>
</evidence>
<evidence type="ECO:0000305" key="6"/>
<evidence type="ECO:0000305" key="7">
    <source ref="1"/>
</evidence>
<comment type="function">
    <text evidence="1">This phospholipase A2 inhibitor binds directly phospholipase A2 in the presence or absence of calcium.</text>
</comment>
<comment type="subunit">
    <text evidence="2">Homotrimer; non-covalently linked.</text>
</comment>
<comment type="subcellular location">
    <subcellularLocation>
        <location evidence="7">Secreted</location>
    </subcellularLocation>
    <text evidence="6">Secreted in plasma.</text>
</comment>
<comment type="tissue specificity">
    <text evidence="7">Expressed by the liver.</text>
</comment>
<comment type="similarity">
    <text evidence="6">Belongs to the alpha-type phospholipase A2 inhibitor family.</text>
</comment>
<dbReference type="EMBL" id="EU421927">
    <property type="protein sequence ID" value="ABZ82344.1"/>
    <property type="molecule type" value="mRNA"/>
</dbReference>
<dbReference type="EMBL" id="EU421928">
    <property type="protein sequence ID" value="ABZ82345.1"/>
    <property type="molecule type" value="mRNA"/>
</dbReference>
<dbReference type="SMR" id="B1A4Q3"/>
<dbReference type="GO" id="GO:0005576">
    <property type="term" value="C:extracellular region"/>
    <property type="evidence" value="ECO:0007669"/>
    <property type="project" value="UniProtKB-SubCell"/>
</dbReference>
<dbReference type="GO" id="GO:0030246">
    <property type="term" value="F:carbohydrate binding"/>
    <property type="evidence" value="ECO:0007669"/>
    <property type="project" value="UniProtKB-KW"/>
</dbReference>
<dbReference type="GO" id="GO:0019834">
    <property type="term" value="F:phospholipase A2 inhibitor activity"/>
    <property type="evidence" value="ECO:0007669"/>
    <property type="project" value="UniProtKB-KW"/>
</dbReference>
<dbReference type="Gene3D" id="3.10.100.10">
    <property type="entry name" value="Mannose-Binding Protein A, subunit A"/>
    <property type="match status" value="1"/>
</dbReference>
<dbReference type="InterPro" id="IPR001304">
    <property type="entry name" value="C-type_lectin-like"/>
</dbReference>
<dbReference type="InterPro" id="IPR016186">
    <property type="entry name" value="C-type_lectin-like/link_sf"/>
</dbReference>
<dbReference type="InterPro" id="IPR018378">
    <property type="entry name" value="C-type_lectin_CS"/>
</dbReference>
<dbReference type="InterPro" id="IPR016187">
    <property type="entry name" value="CTDL_fold"/>
</dbReference>
<dbReference type="Pfam" id="PF00059">
    <property type="entry name" value="Lectin_C"/>
    <property type="match status" value="1"/>
</dbReference>
<dbReference type="SUPFAM" id="SSF56436">
    <property type="entry name" value="C-type lectin-like"/>
    <property type="match status" value="1"/>
</dbReference>
<dbReference type="PROSITE" id="PS00615">
    <property type="entry name" value="C_TYPE_LECTIN_1"/>
    <property type="match status" value="1"/>
</dbReference>
<dbReference type="PROSITE" id="PS50041">
    <property type="entry name" value="C_TYPE_LECTIN_2"/>
    <property type="match status" value="1"/>
</dbReference>
<accession>B1A4Q3</accession>
<name>PLIA6_BOTNU</name>
<sequence length="166" mass="18403">MRLILLSGLLLLGIFLANGHEQDPDGKVLNSLIDALMDLQREFAKLRGAFLTVYKARSFGNGSERMYVTNKEIKNFEALRQICEQAEGHIPSPQLENQNKAFANVLERHGKEAYLVVGDSANFTNWAAGEPNKAAGACVKADTHGSWHSTSCDDNLLVVCEFYFIL</sequence>
<proteinExistence type="evidence at transcript level"/>